<organism>
    <name type="scientific">Bantua robusta</name>
    <name type="common">African bullet roach</name>
    <dbReference type="NCBI Taxonomy" id="344686"/>
    <lineage>
        <taxon>Eukaryota</taxon>
        <taxon>Metazoa</taxon>
        <taxon>Ecdysozoa</taxon>
        <taxon>Arthropoda</taxon>
        <taxon>Hexapoda</taxon>
        <taxon>Insecta</taxon>
        <taxon>Pterygota</taxon>
        <taxon>Neoptera</taxon>
        <taxon>Polyneoptera</taxon>
        <taxon>Dictyoptera</taxon>
        <taxon>Blattodea</taxon>
        <taxon>Blaberoidea</taxon>
        <taxon>Blaberidae</taxon>
        <taxon>Perisphaerinae</taxon>
        <taxon>Bantua</taxon>
    </lineage>
</organism>
<name>PPK5_BANRO</name>
<dbReference type="GO" id="GO:0005576">
    <property type="term" value="C:extracellular region"/>
    <property type="evidence" value="ECO:0007669"/>
    <property type="project" value="UniProtKB-SubCell"/>
</dbReference>
<dbReference type="GO" id="GO:0005184">
    <property type="term" value="F:neuropeptide hormone activity"/>
    <property type="evidence" value="ECO:0007669"/>
    <property type="project" value="InterPro"/>
</dbReference>
<dbReference type="GO" id="GO:0007218">
    <property type="term" value="P:neuropeptide signaling pathway"/>
    <property type="evidence" value="ECO:0007669"/>
    <property type="project" value="UniProtKB-KW"/>
</dbReference>
<dbReference type="InterPro" id="IPR001484">
    <property type="entry name" value="Pyrokinin_CS"/>
</dbReference>
<dbReference type="PROSITE" id="PS00539">
    <property type="entry name" value="PYROKININ"/>
    <property type="match status" value="1"/>
</dbReference>
<reference evidence="5" key="1">
    <citation type="journal article" date="2009" name="BMC Evol. Biol.">
        <title>A proteomic approach for studying insect phylogeny: CAPA peptides of ancient insect taxa (Dictyoptera, Blattoptera) as a test case.</title>
        <authorList>
            <person name="Roth S."/>
            <person name="Fromm B."/>
            <person name="Gaede G."/>
            <person name="Predel R."/>
        </authorList>
    </citation>
    <scope>PROTEIN SEQUENCE</scope>
    <scope>AMIDATION AT LEU-17</scope>
    <source>
        <tissue evidence="3">Abdominal perisympathetic organs</tissue>
    </source>
</reference>
<evidence type="ECO:0000250" key="1">
    <source>
        <dbReference type="UniProtKB" id="P82617"/>
    </source>
</evidence>
<evidence type="ECO:0000255" key="2"/>
<evidence type="ECO:0000269" key="3">
    <source>
    </source>
</evidence>
<evidence type="ECO:0000303" key="4">
    <source>
    </source>
</evidence>
<evidence type="ECO:0000305" key="5"/>
<comment type="function">
    <text evidence="1">Myoactive.</text>
</comment>
<comment type="subcellular location">
    <subcellularLocation>
        <location evidence="5">Secreted</location>
    </subcellularLocation>
</comment>
<comment type="similarity">
    <text evidence="2">Belongs to the pyrokinin family.</text>
</comment>
<feature type="peptide" id="PRO_0000378676" description="Pyrokinin-5" evidence="3">
    <location>
        <begin position="1"/>
        <end position="17"/>
    </location>
</feature>
<feature type="modified residue" description="Leucine amide" evidence="3">
    <location>
        <position position="17"/>
    </location>
</feature>
<accession>P85542</accession>
<proteinExistence type="evidence at protein level"/>
<keyword id="KW-0027">Amidation</keyword>
<keyword id="KW-0903">Direct protein sequencing</keyword>
<keyword id="KW-0527">Neuropeptide</keyword>
<keyword id="KW-0964">Secreted</keyword>
<protein>
    <recommendedName>
        <fullName evidence="1">Pyrokinin-5</fullName>
    </recommendedName>
    <alternativeName>
        <fullName evidence="4">BanRo-Capa-PK</fullName>
    </alternativeName>
    <alternativeName>
        <fullName evidence="1">FXPRL-amide</fullName>
    </alternativeName>
</protein>
<sequence>SGETSGEGNGMWFGPRL</sequence>